<feature type="chain" id="PRO_1000147106" description="Cytidine deaminase">
    <location>
        <begin position="1"/>
        <end position="294"/>
    </location>
</feature>
<feature type="domain" description="CMP/dCMP-type deaminase 1" evidence="2">
    <location>
        <begin position="48"/>
        <end position="168"/>
    </location>
</feature>
<feature type="domain" description="CMP/dCMP-type deaminase 2" evidence="2">
    <location>
        <begin position="187"/>
        <end position="294"/>
    </location>
</feature>
<feature type="active site" description="Proton donor" evidence="1">
    <location>
        <position position="104"/>
    </location>
</feature>
<feature type="binding site" evidence="1">
    <location>
        <begin position="89"/>
        <end position="91"/>
    </location>
    <ligand>
        <name>substrate</name>
    </ligand>
</feature>
<feature type="binding site" evidence="1">
    <location>
        <position position="102"/>
    </location>
    <ligand>
        <name>Zn(2+)</name>
        <dbReference type="ChEBI" id="CHEBI:29105"/>
        <note>catalytic</note>
    </ligand>
</feature>
<feature type="binding site" evidence="1">
    <location>
        <position position="129"/>
    </location>
    <ligand>
        <name>Zn(2+)</name>
        <dbReference type="ChEBI" id="CHEBI:29105"/>
        <note>catalytic</note>
    </ligand>
</feature>
<feature type="binding site" evidence="1">
    <location>
        <position position="132"/>
    </location>
    <ligand>
        <name>Zn(2+)</name>
        <dbReference type="ChEBI" id="CHEBI:29105"/>
        <note>catalytic</note>
    </ligand>
</feature>
<comment type="function">
    <text evidence="1">This enzyme scavenges exogenous and endogenous cytidine and 2'-deoxycytidine for UMP synthesis.</text>
</comment>
<comment type="catalytic activity">
    <reaction evidence="1">
        <text>cytidine + H2O + H(+) = uridine + NH4(+)</text>
        <dbReference type="Rhea" id="RHEA:16069"/>
        <dbReference type="ChEBI" id="CHEBI:15377"/>
        <dbReference type="ChEBI" id="CHEBI:15378"/>
        <dbReference type="ChEBI" id="CHEBI:16704"/>
        <dbReference type="ChEBI" id="CHEBI:17562"/>
        <dbReference type="ChEBI" id="CHEBI:28938"/>
        <dbReference type="EC" id="3.5.4.5"/>
    </reaction>
</comment>
<comment type="catalytic activity">
    <reaction evidence="1">
        <text>2'-deoxycytidine + H2O + H(+) = 2'-deoxyuridine + NH4(+)</text>
        <dbReference type="Rhea" id="RHEA:13433"/>
        <dbReference type="ChEBI" id="CHEBI:15377"/>
        <dbReference type="ChEBI" id="CHEBI:15378"/>
        <dbReference type="ChEBI" id="CHEBI:15698"/>
        <dbReference type="ChEBI" id="CHEBI:16450"/>
        <dbReference type="ChEBI" id="CHEBI:28938"/>
        <dbReference type="EC" id="3.5.4.5"/>
    </reaction>
</comment>
<comment type="cofactor">
    <cofactor evidence="1">
        <name>Zn(2+)</name>
        <dbReference type="ChEBI" id="CHEBI:29105"/>
    </cofactor>
    <text evidence="1">Binds 1 zinc ion.</text>
</comment>
<comment type="subunit">
    <text evidence="1">Homodimer.</text>
</comment>
<comment type="similarity">
    <text evidence="1">Belongs to the cytidine and deoxycytidylate deaminase family.</text>
</comment>
<proteinExistence type="inferred from homology"/>
<sequence>MHTRFQAIWSDLSPQLQQALTPYLEQDEFPAMFTAEQVNALKTQLQCNDDELALALLPVAAACAVTPISHFNVGAIARGESGHFYFGANMEFAGAPLQQTVHAEQSAVTHAWLRGESRLVAITVNYTPCGHCRQFMNELNSGTHIAIHLPGRKVATLGDYLPDSFGPKDLNITTLLMDKVNHGYQIDNTSQLAQQALQAINRSHAPYSHSHSGIAVQMKSGKIFQGSYAENAAFNPSMPPLQAALIALNMAGENVMDIESAILIEKADSLLTQWDATQATLTALGCRQIQRVTL</sequence>
<dbReference type="EC" id="3.5.4.5" evidence="1"/>
<dbReference type="EMBL" id="AM942759">
    <property type="protein sequence ID" value="CAR41521.1"/>
    <property type="molecule type" value="Genomic_DNA"/>
</dbReference>
<dbReference type="RefSeq" id="WP_004247586.1">
    <property type="nucleotide sequence ID" value="NC_010554.1"/>
</dbReference>
<dbReference type="SMR" id="B4ESY3"/>
<dbReference type="EnsemblBacteria" id="CAR41521">
    <property type="protein sequence ID" value="CAR41521"/>
    <property type="gene ID" value="PMI0643"/>
</dbReference>
<dbReference type="GeneID" id="6800263"/>
<dbReference type="KEGG" id="pmr:PMI0643"/>
<dbReference type="eggNOG" id="COG0295">
    <property type="taxonomic scope" value="Bacteria"/>
</dbReference>
<dbReference type="HOGENOM" id="CLU_052424_0_0_6"/>
<dbReference type="Proteomes" id="UP000008319">
    <property type="component" value="Chromosome"/>
</dbReference>
<dbReference type="GO" id="GO:0005829">
    <property type="term" value="C:cytosol"/>
    <property type="evidence" value="ECO:0007669"/>
    <property type="project" value="TreeGrafter"/>
</dbReference>
<dbReference type="GO" id="GO:0004126">
    <property type="term" value="F:cytidine deaminase activity"/>
    <property type="evidence" value="ECO:0007669"/>
    <property type="project" value="UniProtKB-UniRule"/>
</dbReference>
<dbReference type="GO" id="GO:0042802">
    <property type="term" value="F:identical protein binding"/>
    <property type="evidence" value="ECO:0007669"/>
    <property type="project" value="UniProtKB-ARBA"/>
</dbReference>
<dbReference type="GO" id="GO:0008270">
    <property type="term" value="F:zinc ion binding"/>
    <property type="evidence" value="ECO:0007669"/>
    <property type="project" value="UniProtKB-UniRule"/>
</dbReference>
<dbReference type="GO" id="GO:0009972">
    <property type="term" value="P:cytidine deamination"/>
    <property type="evidence" value="ECO:0007669"/>
    <property type="project" value="InterPro"/>
</dbReference>
<dbReference type="CDD" id="cd01283">
    <property type="entry name" value="cytidine_deaminase"/>
    <property type="match status" value="2"/>
</dbReference>
<dbReference type="FunFam" id="3.40.140.10:FF:000006">
    <property type="entry name" value="Cytidine deaminase"/>
    <property type="match status" value="1"/>
</dbReference>
<dbReference type="FunFam" id="3.40.140.10:FF:000007">
    <property type="entry name" value="Cytidine deaminase"/>
    <property type="match status" value="1"/>
</dbReference>
<dbReference type="Gene3D" id="3.40.140.10">
    <property type="entry name" value="Cytidine Deaminase, domain 2"/>
    <property type="match status" value="2"/>
</dbReference>
<dbReference type="HAMAP" id="MF_01558">
    <property type="entry name" value="Cyt_deam"/>
    <property type="match status" value="1"/>
</dbReference>
<dbReference type="InterPro" id="IPR016192">
    <property type="entry name" value="APOBEC/CMP_deaminase_Zn-bd"/>
</dbReference>
<dbReference type="InterPro" id="IPR002125">
    <property type="entry name" value="CMP_dCMP_dom"/>
</dbReference>
<dbReference type="InterPro" id="IPR013171">
    <property type="entry name" value="Cyd/dCyd_deaminase_Zn-bd"/>
</dbReference>
<dbReference type="InterPro" id="IPR050202">
    <property type="entry name" value="Cyt/Deoxycyt_deaminase"/>
</dbReference>
<dbReference type="InterPro" id="IPR006263">
    <property type="entry name" value="Cyt_deam_dimer"/>
</dbReference>
<dbReference type="InterPro" id="IPR016193">
    <property type="entry name" value="Cytidine_deaminase-like"/>
</dbReference>
<dbReference type="InterPro" id="IPR020797">
    <property type="entry name" value="Cytidine_deaminase_bacteria"/>
</dbReference>
<dbReference type="NCBIfam" id="TIGR01355">
    <property type="entry name" value="cyt_deam_dimer"/>
    <property type="match status" value="1"/>
</dbReference>
<dbReference type="NCBIfam" id="NF006537">
    <property type="entry name" value="PRK09027.1"/>
    <property type="match status" value="1"/>
</dbReference>
<dbReference type="PANTHER" id="PTHR11644">
    <property type="entry name" value="CYTIDINE DEAMINASE"/>
    <property type="match status" value="1"/>
</dbReference>
<dbReference type="PANTHER" id="PTHR11644:SF2">
    <property type="entry name" value="CYTIDINE DEAMINASE"/>
    <property type="match status" value="1"/>
</dbReference>
<dbReference type="Pfam" id="PF00383">
    <property type="entry name" value="dCMP_cyt_deam_1"/>
    <property type="match status" value="1"/>
</dbReference>
<dbReference type="Pfam" id="PF08211">
    <property type="entry name" value="dCMP_cyt_deam_2"/>
    <property type="match status" value="1"/>
</dbReference>
<dbReference type="PIRSF" id="PIRSF006334">
    <property type="entry name" value="Cdd_plus_pseudo"/>
    <property type="match status" value="1"/>
</dbReference>
<dbReference type="SUPFAM" id="SSF53927">
    <property type="entry name" value="Cytidine deaminase-like"/>
    <property type="match status" value="2"/>
</dbReference>
<dbReference type="PROSITE" id="PS00903">
    <property type="entry name" value="CYT_DCMP_DEAMINASES_1"/>
    <property type="match status" value="1"/>
</dbReference>
<dbReference type="PROSITE" id="PS51747">
    <property type="entry name" value="CYT_DCMP_DEAMINASES_2"/>
    <property type="match status" value="2"/>
</dbReference>
<evidence type="ECO:0000255" key="1">
    <source>
        <dbReference type="HAMAP-Rule" id="MF_01558"/>
    </source>
</evidence>
<evidence type="ECO:0000255" key="2">
    <source>
        <dbReference type="PROSITE-ProRule" id="PRU01083"/>
    </source>
</evidence>
<organism>
    <name type="scientific">Proteus mirabilis (strain HI4320)</name>
    <dbReference type="NCBI Taxonomy" id="529507"/>
    <lineage>
        <taxon>Bacteria</taxon>
        <taxon>Pseudomonadati</taxon>
        <taxon>Pseudomonadota</taxon>
        <taxon>Gammaproteobacteria</taxon>
        <taxon>Enterobacterales</taxon>
        <taxon>Morganellaceae</taxon>
        <taxon>Proteus</taxon>
    </lineage>
</organism>
<gene>
    <name evidence="1" type="primary">cdd</name>
    <name type="ordered locus">PMI0643</name>
</gene>
<accession>B4ESY3</accession>
<reference key="1">
    <citation type="journal article" date="2008" name="J. Bacteriol.">
        <title>Complete genome sequence of uropathogenic Proteus mirabilis, a master of both adherence and motility.</title>
        <authorList>
            <person name="Pearson M.M."/>
            <person name="Sebaihia M."/>
            <person name="Churcher C."/>
            <person name="Quail M.A."/>
            <person name="Seshasayee A.S."/>
            <person name="Luscombe N.M."/>
            <person name="Abdellah Z."/>
            <person name="Arrosmith C."/>
            <person name="Atkin B."/>
            <person name="Chillingworth T."/>
            <person name="Hauser H."/>
            <person name="Jagels K."/>
            <person name="Moule S."/>
            <person name="Mungall K."/>
            <person name="Norbertczak H."/>
            <person name="Rabbinowitsch E."/>
            <person name="Walker D."/>
            <person name="Whithead S."/>
            <person name="Thomson N.R."/>
            <person name="Rather P.N."/>
            <person name="Parkhill J."/>
            <person name="Mobley H.L.T."/>
        </authorList>
    </citation>
    <scope>NUCLEOTIDE SEQUENCE [LARGE SCALE GENOMIC DNA]</scope>
    <source>
        <strain>HI4320</strain>
    </source>
</reference>
<name>CDD_PROMH</name>
<keyword id="KW-0378">Hydrolase</keyword>
<keyword id="KW-0479">Metal-binding</keyword>
<keyword id="KW-1185">Reference proteome</keyword>
<keyword id="KW-0862">Zinc</keyword>
<protein>
    <recommendedName>
        <fullName evidence="1">Cytidine deaminase</fullName>
        <ecNumber evidence="1">3.5.4.5</ecNumber>
    </recommendedName>
    <alternativeName>
        <fullName evidence="1">Cytidine aminohydrolase</fullName>
        <shortName evidence="1">CDA</shortName>
    </alternativeName>
</protein>